<name>UREG_CERS1</name>
<dbReference type="EMBL" id="CP000577">
    <property type="protein sequence ID" value="ABN77050.1"/>
    <property type="molecule type" value="Genomic_DNA"/>
</dbReference>
<dbReference type="RefSeq" id="WP_011841337.1">
    <property type="nucleotide sequence ID" value="NC_009049.1"/>
</dbReference>
<dbReference type="SMR" id="A3PL34"/>
<dbReference type="KEGG" id="rsh:Rsph17029_1946"/>
<dbReference type="HOGENOM" id="CLU_072144_1_0_5"/>
<dbReference type="GO" id="GO:0005737">
    <property type="term" value="C:cytoplasm"/>
    <property type="evidence" value="ECO:0007669"/>
    <property type="project" value="UniProtKB-SubCell"/>
</dbReference>
<dbReference type="GO" id="GO:0005525">
    <property type="term" value="F:GTP binding"/>
    <property type="evidence" value="ECO:0007669"/>
    <property type="project" value="UniProtKB-KW"/>
</dbReference>
<dbReference type="GO" id="GO:0003924">
    <property type="term" value="F:GTPase activity"/>
    <property type="evidence" value="ECO:0007669"/>
    <property type="project" value="InterPro"/>
</dbReference>
<dbReference type="GO" id="GO:0016151">
    <property type="term" value="F:nickel cation binding"/>
    <property type="evidence" value="ECO:0007669"/>
    <property type="project" value="UniProtKB-UniRule"/>
</dbReference>
<dbReference type="GO" id="GO:0043419">
    <property type="term" value="P:urea catabolic process"/>
    <property type="evidence" value="ECO:0007669"/>
    <property type="project" value="InterPro"/>
</dbReference>
<dbReference type="CDD" id="cd05540">
    <property type="entry name" value="UreG"/>
    <property type="match status" value="1"/>
</dbReference>
<dbReference type="Gene3D" id="3.40.50.300">
    <property type="entry name" value="P-loop containing nucleotide triphosphate hydrolases"/>
    <property type="match status" value="1"/>
</dbReference>
<dbReference type="HAMAP" id="MF_01389">
    <property type="entry name" value="UreG"/>
    <property type="match status" value="1"/>
</dbReference>
<dbReference type="InterPro" id="IPR003495">
    <property type="entry name" value="CobW/HypB/UreG_nucleotide-bd"/>
</dbReference>
<dbReference type="InterPro" id="IPR027417">
    <property type="entry name" value="P-loop_NTPase"/>
</dbReference>
<dbReference type="InterPro" id="IPR004400">
    <property type="entry name" value="UreG"/>
</dbReference>
<dbReference type="NCBIfam" id="TIGR00101">
    <property type="entry name" value="ureG"/>
    <property type="match status" value="1"/>
</dbReference>
<dbReference type="PANTHER" id="PTHR31715">
    <property type="entry name" value="UREASE ACCESSORY PROTEIN G"/>
    <property type="match status" value="1"/>
</dbReference>
<dbReference type="PANTHER" id="PTHR31715:SF0">
    <property type="entry name" value="UREASE ACCESSORY PROTEIN G"/>
    <property type="match status" value="1"/>
</dbReference>
<dbReference type="Pfam" id="PF02492">
    <property type="entry name" value="cobW"/>
    <property type="match status" value="1"/>
</dbReference>
<dbReference type="PIRSF" id="PIRSF005624">
    <property type="entry name" value="Ni-bind_GTPase"/>
    <property type="match status" value="1"/>
</dbReference>
<dbReference type="SUPFAM" id="SSF52540">
    <property type="entry name" value="P-loop containing nucleoside triphosphate hydrolases"/>
    <property type="match status" value="1"/>
</dbReference>
<feature type="chain" id="PRO_0000347440" description="Urease accessory protein UreG">
    <location>
        <begin position="1"/>
        <end position="207"/>
    </location>
</feature>
<feature type="binding site" evidence="1">
    <location>
        <begin position="12"/>
        <end position="19"/>
    </location>
    <ligand>
        <name>GTP</name>
        <dbReference type="ChEBI" id="CHEBI:37565"/>
    </ligand>
</feature>
<keyword id="KW-0143">Chaperone</keyword>
<keyword id="KW-0963">Cytoplasm</keyword>
<keyword id="KW-0342">GTP-binding</keyword>
<keyword id="KW-0996">Nickel insertion</keyword>
<keyword id="KW-0547">Nucleotide-binding</keyword>
<proteinExistence type="inferred from homology"/>
<organism>
    <name type="scientific">Cereibacter sphaeroides (strain ATCC 17029 / ATH 2.4.9)</name>
    <name type="common">Rhodobacter sphaeroides</name>
    <dbReference type="NCBI Taxonomy" id="349101"/>
    <lineage>
        <taxon>Bacteria</taxon>
        <taxon>Pseudomonadati</taxon>
        <taxon>Pseudomonadota</taxon>
        <taxon>Alphaproteobacteria</taxon>
        <taxon>Rhodobacterales</taxon>
        <taxon>Paracoccaceae</taxon>
        <taxon>Cereibacter</taxon>
    </lineage>
</organism>
<evidence type="ECO:0000255" key="1">
    <source>
        <dbReference type="HAMAP-Rule" id="MF_01389"/>
    </source>
</evidence>
<sequence>MSHGPLRVGIGGPVGAGKTTLTEKLCAALAHRCSMAVITNDIYTREDAEALMRAQVLPAERIRGVETGGCPHTAIREDASINLAAVADLRRTFPDLDLILIESGGDNLAATFSPELADLTIYVIDTAAGQDIPRKRGPGLARSDLLVVNKTDLAPHVGVDLARLEADTQAARGQRPYVMARMRAGVGVEAIVAFLEREGGLQLLPQD</sequence>
<protein>
    <recommendedName>
        <fullName evidence="1">Urease accessory protein UreG</fullName>
    </recommendedName>
</protein>
<gene>
    <name evidence="1" type="primary">ureG</name>
    <name type="ordered locus">Rsph17029_1946</name>
</gene>
<accession>A3PL34</accession>
<reference key="1">
    <citation type="submission" date="2007-02" db="EMBL/GenBank/DDBJ databases">
        <title>Complete sequence of chromosome 1 of Rhodobacter sphaeroides ATCC 17029.</title>
        <authorList>
            <person name="Copeland A."/>
            <person name="Lucas S."/>
            <person name="Lapidus A."/>
            <person name="Barry K."/>
            <person name="Detter J.C."/>
            <person name="Glavina del Rio T."/>
            <person name="Hammon N."/>
            <person name="Israni S."/>
            <person name="Dalin E."/>
            <person name="Tice H."/>
            <person name="Pitluck S."/>
            <person name="Kiss H."/>
            <person name="Brettin T."/>
            <person name="Bruce D."/>
            <person name="Han C."/>
            <person name="Tapia R."/>
            <person name="Gilna P."/>
            <person name="Schmutz J."/>
            <person name="Larimer F."/>
            <person name="Land M."/>
            <person name="Hauser L."/>
            <person name="Kyrpides N."/>
            <person name="Mikhailova N."/>
            <person name="Richardson P."/>
            <person name="Mackenzie C."/>
            <person name="Choudhary M."/>
            <person name="Donohue T.J."/>
            <person name="Kaplan S."/>
        </authorList>
    </citation>
    <scope>NUCLEOTIDE SEQUENCE [LARGE SCALE GENOMIC DNA]</scope>
    <source>
        <strain>ATCC 17029 / ATH 2.4.9</strain>
    </source>
</reference>
<comment type="function">
    <text evidence="1">Facilitates the functional incorporation of the urease nickel metallocenter. This process requires GTP hydrolysis, probably effectuated by UreG.</text>
</comment>
<comment type="subunit">
    <text evidence="1">Homodimer. UreD, UreF and UreG form a complex that acts as a GTP-hydrolysis-dependent molecular chaperone, activating the urease apoprotein by helping to assemble the nickel containing metallocenter of UreC. The UreE protein probably delivers the nickel.</text>
</comment>
<comment type="subcellular location">
    <subcellularLocation>
        <location evidence="1">Cytoplasm</location>
    </subcellularLocation>
</comment>
<comment type="similarity">
    <text evidence="1">Belongs to the SIMIBI class G3E GTPase family. UreG subfamily.</text>
</comment>